<accession>Q6FJ50</accession>
<dbReference type="EMBL" id="CR380959">
    <property type="protein sequence ID" value="CAG62722.1"/>
    <property type="molecule type" value="Genomic_DNA"/>
</dbReference>
<dbReference type="RefSeq" id="XP_449744.1">
    <property type="nucleotide sequence ID" value="XM_449744.1"/>
</dbReference>
<dbReference type="SMR" id="Q6FJ50"/>
<dbReference type="FunCoup" id="Q6FJ50">
    <property type="interactions" value="113"/>
</dbReference>
<dbReference type="STRING" id="284593.Q6FJ50"/>
<dbReference type="EnsemblFungi" id="CAGL0M09207g-T">
    <property type="protein sequence ID" value="CAGL0M09207g-T-p1"/>
    <property type="gene ID" value="CAGL0M09207g"/>
</dbReference>
<dbReference type="KEGG" id="cgr:2891308"/>
<dbReference type="CGD" id="CAL0136329">
    <property type="gene designation" value="CAGL0M09207g"/>
</dbReference>
<dbReference type="VEuPathDB" id="FungiDB:B1J91_M09207g"/>
<dbReference type="VEuPathDB" id="FungiDB:CAGL0M09207g"/>
<dbReference type="eggNOG" id="ENOG502S5Z5">
    <property type="taxonomic scope" value="Eukaryota"/>
</dbReference>
<dbReference type="HOGENOM" id="CLU_163540_0_0_1"/>
<dbReference type="InParanoid" id="Q6FJ50"/>
<dbReference type="OMA" id="TECCTIM"/>
<dbReference type="Proteomes" id="UP000002428">
    <property type="component" value="Chromosome M"/>
</dbReference>
<dbReference type="GO" id="GO:0120171">
    <property type="term" value="C:Cdc24p-Far1p-Gbetagamma complex"/>
    <property type="evidence" value="ECO:0007669"/>
    <property type="project" value="EnsemblFungi"/>
</dbReference>
<dbReference type="GO" id="GO:0031680">
    <property type="term" value="C:G-protein beta/gamma-subunit complex"/>
    <property type="evidence" value="ECO:0007669"/>
    <property type="project" value="EnsemblFungi"/>
</dbReference>
<dbReference type="GO" id="GO:0005834">
    <property type="term" value="C:heterotrimeric G-protein complex"/>
    <property type="evidence" value="ECO:0007669"/>
    <property type="project" value="EnsemblFungi"/>
</dbReference>
<dbReference type="GO" id="GO:0031681">
    <property type="term" value="F:G-protein beta-subunit binding"/>
    <property type="evidence" value="ECO:0007669"/>
    <property type="project" value="EnsemblFungi"/>
</dbReference>
<dbReference type="GO" id="GO:0007186">
    <property type="term" value="P:G protein-coupled receptor signaling pathway"/>
    <property type="evidence" value="ECO:0007669"/>
    <property type="project" value="InterPro"/>
</dbReference>
<dbReference type="GO" id="GO:0000750">
    <property type="term" value="P:pheromone-dependent signal transduction involved in conjugation with cellular fusion"/>
    <property type="evidence" value="ECO:0007669"/>
    <property type="project" value="EnsemblFungi"/>
</dbReference>
<dbReference type="Gene3D" id="4.10.260.10">
    <property type="entry name" value="Transducin (heterotrimeric G protein), gamma chain"/>
    <property type="match status" value="1"/>
</dbReference>
<dbReference type="InterPro" id="IPR015898">
    <property type="entry name" value="G-protein_gamma-like_dom"/>
</dbReference>
<dbReference type="InterPro" id="IPR036284">
    <property type="entry name" value="GGL_sf"/>
</dbReference>
<dbReference type="InterPro" id="IPR041848">
    <property type="entry name" value="Ste18_fungal"/>
</dbReference>
<dbReference type="PANTHER" id="PTHR28189">
    <property type="entry name" value="GUANINE NUCLEOTIDE-BINDING PROTEIN SUBUNIT GAMMA"/>
    <property type="match status" value="1"/>
</dbReference>
<dbReference type="PANTHER" id="PTHR28189:SF1">
    <property type="entry name" value="GUANINE NUCLEOTIDE-BINDING PROTEIN SUBUNIT GAMMA"/>
    <property type="match status" value="1"/>
</dbReference>
<dbReference type="Pfam" id="PF00631">
    <property type="entry name" value="G-gamma"/>
    <property type="match status" value="1"/>
</dbReference>
<dbReference type="SMART" id="SM01224">
    <property type="entry name" value="G_gamma"/>
    <property type="match status" value="1"/>
</dbReference>
<dbReference type="SMART" id="SM00224">
    <property type="entry name" value="GGL"/>
    <property type="match status" value="1"/>
</dbReference>
<keyword id="KW-0449">Lipoprotein</keyword>
<keyword id="KW-0472">Membrane</keyword>
<keyword id="KW-0488">Methylation</keyword>
<keyword id="KW-0564">Palmitate</keyword>
<keyword id="KW-0636">Prenylation</keyword>
<keyword id="KW-1185">Reference proteome</keyword>
<keyword id="KW-0807">Transducer</keyword>
<feature type="chain" id="PRO_0000194806" description="Guanine nucleotide-binding protein subunit gamma">
    <location>
        <begin position="1"/>
        <end position="85"/>
    </location>
</feature>
<feature type="propeptide" id="PRO_0000396769" description="Removed in mature form" evidence="1">
    <location>
        <begin position="86"/>
        <end position="88"/>
    </location>
</feature>
<feature type="modified residue" description="Cysteine methyl ester" evidence="1">
    <location>
        <position position="85"/>
    </location>
</feature>
<feature type="lipid moiety-binding region" description="S-palmitoyl cysteine" evidence="1">
    <location>
        <position position="84"/>
    </location>
</feature>
<feature type="lipid moiety-binding region" description="S-farnesyl cysteine" evidence="1">
    <location>
        <position position="85"/>
    </location>
</feature>
<evidence type="ECO:0000250" key="1"/>
<evidence type="ECO:0000305" key="2"/>
<gene>
    <name type="ordered locus">CAGL0M09207g</name>
</gene>
<organism>
    <name type="scientific">Candida glabrata (strain ATCC 2001 / BCRC 20586 / JCM 3761 / NBRC 0622 / NRRL Y-65 / CBS 138)</name>
    <name type="common">Yeast</name>
    <name type="synonym">Nakaseomyces glabratus</name>
    <dbReference type="NCBI Taxonomy" id="284593"/>
    <lineage>
        <taxon>Eukaryota</taxon>
        <taxon>Fungi</taxon>
        <taxon>Dikarya</taxon>
        <taxon>Ascomycota</taxon>
        <taxon>Saccharomycotina</taxon>
        <taxon>Saccharomycetes</taxon>
        <taxon>Saccharomycetales</taxon>
        <taxon>Saccharomycetaceae</taxon>
        <taxon>Nakaseomyces</taxon>
    </lineage>
</organism>
<name>GBG_CANGA</name>
<sequence>MEVSQSQLDLKIKYLKLKRINELNDKLRDELQRERITASNACLQLIAYTTSTRDYALPTLWGYPPADTNHFRDFQTQHADDATCCTIM</sequence>
<comment type="subunit">
    <text>G proteins are composed of 3 units, alpha, beta and gamma.</text>
</comment>
<comment type="subcellular location">
    <subcellularLocation>
        <location evidence="1">Membrane</location>
        <topology evidence="1">Peripheral membrane protein</topology>
    </subcellularLocation>
</comment>
<comment type="similarity">
    <text evidence="2">Belongs to the G protein gamma family.</text>
</comment>
<protein>
    <recommendedName>
        <fullName>Guanine nucleotide-binding protein subunit gamma</fullName>
    </recommendedName>
</protein>
<reference key="1">
    <citation type="journal article" date="2004" name="Nature">
        <title>Genome evolution in yeasts.</title>
        <authorList>
            <person name="Dujon B."/>
            <person name="Sherman D."/>
            <person name="Fischer G."/>
            <person name="Durrens P."/>
            <person name="Casaregola S."/>
            <person name="Lafontaine I."/>
            <person name="de Montigny J."/>
            <person name="Marck C."/>
            <person name="Neuveglise C."/>
            <person name="Talla E."/>
            <person name="Goffard N."/>
            <person name="Frangeul L."/>
            <person name="Aigle M."/>
            <person name="Anthouard V."/>
            <person name="Babour A."/>
            <person name="Barbe V."/>
            <person name="Barnay S."/>
            <person name="Blanchin S."/>
            <person name="Beckerich J.-M."/>
            <person name="Beyne E."/>
            <person name="Bleykasten C."/>
            <person name="Boisrame A."/>
            <person name="Boyer J."/>
            <person name="Cattolico L."/>
            <person name="Confanioleri F."/>
            <person name="de Daruvar A."/>
            <person name="Despons L."/>
            <person name="Fabre E."/>
            <person name="Fairhead C."/>
            <person name="Ferry-Dumazet H."/>
            <person name="Groppi A."/>
            <person name="Hantraye F."/>
            <person name="Hennequin C."/>
            <person name="Jauniaux N."/>
            <person name="Joyet P."/>
            <person name="Kachouri R."/>
            <person name="Kerrest A."/>
            <person name="Koszul R."/>
            <person name="Lemaire M."/>
            <person name="Lesur I."/>
            <person name="Ma L."/>
            <person name="Muller H."/>
            <person name="Nicaud J.-M."/>
            <person name="Nikolski M."/>
            <person name="Oztas S."/>
            <person name="Ozier-Kalogeropoulos O."/>
            <person name="Pellenz S."/>
            <person name="Potier S."/>
            <person name="Richard G.-F."/>
            <person name="Straub M.-L."/>
            <person name="Suleau A."/>
            <person name="Swennen D."/>
            <person name="Tekaia F."/>
            <person name="Wesolowski-Louvel M."/>
            <person name="Westhof E."/>
            <person name="Wirth B."/>
            <person name="Zeniou-Meyer M."/>
            <person name="Zivanovic Y."/>
            <person name="Bolotin-Fukuhara M."/>
            <person name="Thierry A."/>
            <person name="Bouchier C."/>
            <person name="Caudron B."/>
            <person name="Scarpelli C."/>
            <person name="Gaillardin C."/>
            <person name="Weissenbach J."/>
            <person name="Wincker P."/>
            <person name="Souciet J.-L."/>
        </authorList>
    </citation>
    <scope>NUCLEOTIDE SEQUENCE [LARGE SCALE GENOMIC DNA]</scope>
    <source>
        <strain>ATCC 2001 / BCRC 20586 / JCM 3761 / NBRC 0622 / NRRL Y-65 / CBS 138</strain>
    </source>
</reference>
<proteinExistence type="inferred from homology"/>